<dbReference type="EMBL" id="AF033012">
    <property type="protein sequence ID" value="AAC83461.1"/>
    <property type="molecule type" value="mRNA"/>
</dbReference>
<dbReference type="RefSeq" id="NP_001233612.1">
    <property type="nucleotide sequence ID" value="NM_001246683.1"/>
</dbReference>
<dbReference type="SMR" id="Q9Z2Q8"/>
<dbReference type="PaxDb" id="10029-NP_001233612.1"/>
<dbReference type="GeneID" id="100689418"/>
<dbReference type="KEGG" id="cge:100689418"/>
<dbReference type="CTD" id="2353"/>
<dbReference type="eggNOG" id="KOG1414">
    <property type="taxonomic scope" value="Eukaryota"/>
</dbReference>
<dbReference type="OrthoDB" id="5866312at2759"/>
<dbReference type="Proteomes" id="UP000694386">
    <property type="component" value="Unplaced"/>
</dbReference>
<dbReference type="Proteomes" id="UP001108280">
    <property type="component" value="Chromosome 5"/>
</dbReference>
<dbReference type="GO" id="GO:0005829">
    <property type="term" value="C:cytosol"/>
    <property type="evidence" value="ECO:0007669"/>
    <property type="project" value="UniProtKB-SubCell"/>
</dbReference>
<dbReference type="GO" id="GO:0005783">
    <property type="term" value="C:endoplasmic reticulum"/>
    <property type="evidence" value="ECO:0007669"/>
    <property type="project" value="UniProtKB-SubCell"/>
</dbReference>
<dbReference type="GO" id="GO:0005634">
    <property type="term" value="C:nucleus"/>
    <property type="evidence" value="ECO:0007669"/>
    <property type="project" value="UniProtKB-SubCell"/>
</dbReference>
<dbReference type="GO" id="GO:0000981">
    <property type="term" value="F:DNA-binding transcription factor activity, RNA polymerase II-specific"/>
    <property type="evidence" value="ECO:0007669"/>
    <property type="project" value="TreeGrafter"/>
</dbReference>
<dbReference type="GO" id="GO:0000978">
    <property type="term" value="F:RNA polymerase II cis-regulatory region sequence-specific DNA binding"/>
    <property type="evidence" value="ECO:0007669"/>
    <property type="project" value="TreeGrafter"/>
</dbReference>
<dbReference type="CDD" id="cd14721">
    <property type="entry name" value="bZIP_Fos"/>
    <property type="match status" value="1"/>
</dbReference>
<dbReference type="FunFam" id="1.20.5.170:FF:000006">
    <property type="entry name" value="fos-related antigen 2 isoform X1"/>
    <property type="match status" value="1"/>
</dbReference>
<dbReference type="Gene3D" id="1.20.5.170">
    <property type="match status" value="1"/>
</dbReference>
<dbReference type="InterPro" id="IPR000837">
    <property type="entry name" value="AP-1"/>
</dbReference>
<dbReference type="InterPro" id="IPR004827">
    <property type="entry name" value="bZIP"/>
</dbReference>
<dbReference type="InterPro" id="IPR046347">
    <property type="entry name" value="bZIP_sf"/>
</dbReference>
<dbReference type="PANTHER" id="PTHR23351">
    <property type="entry name" value="FOS TRANSCRIPTION FACTOR-RELATED"/>
    <property type="match status" value="1"/>
</dbReference>
<dbReference type="PANTHER" id="PTHR23351:SF4">
    <property type="entry name" value="PROTEIN C-FOS"/>
    <property type="match status" value="1"/>
</dbReference>
<dbReference type="Pfam" id="PF00170">
    <property type="entry name" value="bZIP_1"/>
    <property type="match status" value="1"/>
</dbReference>
<dbReference type="PRINTS" id="PR00042">
    <property type="entry name" value="LEUZIPPRFOS"/>
</dbReference>
<dbReference type="SMART" id="SM00338">
    <property type="entry name" value="BRLZ"/>
    <property type="match status" value="1"/>
</dbReference>
<dbReference type="SUPFAM" id="SSF57959">
    <property type="entry name" value="Leucine zipper domain"/>
    <property type="match status" value="1"/>
</dbReference>
<dbReference type="PROSITE" id="PS50217">
    <property type="entry name" value="BZIP"/>
    <property type="match status" value="1"/>
</dbReference>
<proteinExistence type="evidence at transcript level"/>
<feature type="chain" id="PRO_0000076463" description="Protein c-Fos">
    <location>
        <begin position="1"/>
        <end position="381"/>
    </location>
</feature>
<feature type="domain" description="bZIP" evidence="5">
    <location>
        <begin position="137"/>
        <end position="200"/>
    </location>
</feature>
<feature type="region of interest" description="Basic motif; required for the activation of phospholipid synthesis, but not for CDS1-binding" evidence="5">
    <location>
        <begin position="139"/>
        <end position="159"/>
    </location>
</feature>
<feature type="region of interest" description="Leucine-zipper" evidence="5">
    <location>
        <begin position="165"/>
        <end position="193"/>
    </location>
</feature>
<feature type="region of interest" description="Disordered" evidence="6">
    <location>
        <begin position="271"/>
        <end position="292"/>
    </location>
</feature>
<feature type="region of interest" description="Disordered" evidence="6">
    <location>
        <begin position="355"/>
        <end position="381"/>
    </location>
</feature>
<feature type="compositionally biased region" description="Polar residues" evidence="6">
    <location>
        <begin position="279"/>
        <end position="288"/>
    </location>
</feature>
<feature type="compositionally biased region" description="Low complexity" evidence="6">
    <location>
        <begin position="363"/>
        <end position="375"/>
    </location>
</feature>
<feature type="modified residue" description="Phosphotyrosine; by SRC" evidence="2">
    <location>
        <position position="10"/>
    </location>
</feature>
<feature type="modified residue" description="Phosphotyrosine; by SRC" evidence="2">
    <location>
        <position position="30"/>
    </location>
</feature>
<feature type="modified residue" description="Phosphothreonine" evidence="3">
    <location>
        <position position="232"/>
    </location>
</feature>
<feature type="modified residue" description="Phosphothreonine; by MAPK1 and MAPK3" evidence="2">
    <location>
        <position position="326"/>
    </location>
</feature>
<feature type="modified residue" description="Phosphothreonine; by MAPK1 and MAPK3" evidence="2">
    <location>
        <position position="332"/>
    </location>
</feature>
<feature type="modified residue" description="Phosphoserine; by MAPK1, MAPK3 and RPS6KA3" evidence="2">
    <location>
        <position position="363"/>
    </location>
</feature>
<feature type="modified residue" description="Phosphoserine; by MAPK1 and MAPK3" evidence="2">
    <location>
        <position position="375"/>
    </location>
</feature>
<feature type="cross-link" description="Glycyl lysine isopeptide (Lys-Gly) (interchain with G-Cter in SUMO2)" evidence="2">
    <location>
        <position position="113"/>
    </location>
</feature>
<feature type="cross-link" description="Glycyl lysine isopeptide (Lys-Gly) (interchain with G-Cter in SUMO2)" evidence="2">
    <location>
        <position position="128"/>
    </location>
</feature>
<feature type="cross-link" description="Glycyl lysine isopeptide (Lys-Gly) (interchain with G-Cter in SUMO); alternate" evidence="1">
    <location>
        <position position="265"/>
    </location>
</feature>
<feature type="cross-link" description="Glycyl lysine isopeptide (Lys-Gly) (interchain with G-Cter in SUMO2); alternate" evidence="2">
    <location>
        <position position="265"/>
    </location>
</feature>
<keyword id="KW-0963">Cytoplasm</keyword>
<keyword id="KW-0238">DNA-binding</keyword>
<keyword id="KW-0256">Endoplasmic reticulum</keyword>
<keyword id="KW-1017">Isopeptide bond</keyword>
<keyword id="KW-0539">Nucleus</keyword>
<keyword id="KW-0597">Phosphoprotein</keyword>
<keyword id="KW-0656">Proto-oncogene</keyword>
<keyword id="KW-0832">Ubl conjugation</keyword>
<sequence>MMFSGFNADYEASSSRCSSASPAGDSLSYYHSPADSFSSMGSPVNAQDFCADLSGSSANFIPTVTAISTSPDLQWLVQPTLVSSVAPSQTRAPHPYGVPTPSAGAYSRAAMVKTVSGGRAQSISRRSKVEQLSPEEEEKRRIRRERNKMAAAKCWNRRRELTDTLQAETDQLEDEKSALQTEIANLLKEKEKLEFILAAHRPACKIPDDLGFPEEMSVASLDLTGGLPEATTPESEEAFSLPLLNDAEPKTSLEPVKSISNMELKAEPFDDFLFPPSSRPSGSETTARSVPDMDLSGSFYAADWEPLHSSSLGMGPMVTELEPLCTPVVTCTPSCTTYTSSFVFTYPEADSFPSCAAAHRKGSSSNEPSSDSLSSPTLLAL</sequence>
<reference key="1">
    <citation type="journal article" date="1999" name="Anal. Biochem.">
        <title>High-throughput screening for ligand-induced c-fos mRNA expression by branched DNA assay in Chinese hamster ovary cells.</title>
        <authorList>
            <person name="Shyamala V."/>
            <person name="Khoja H."/>
            <person name="Wang J.-X."/>
            <person name="Cen H."/>
            <person name="Kavanaugh W.M."/>
        </authorList>
    </citation>
    <scope>NUCLEOTIDE SEQUENCE [MRNA]</scope>
    <source>
        <tissue>Ovary</tissue>
    </source>
</reference>
<protein>
    <recommendedName>
        <fullName evidence="7">Protein c-Fos</fullName>
    </recommendedName>
    <alternativeName>
        <fullName>Cellular oncogene fos</fullName>
    </alternativeName>
    <alternativeName>
        <fullName evidence="7">Transcription factor AP-1 subunit c-Fos</fullName>
    </alternativeName>
</protein>
<organism>
    <name type="scientific">Cricetulus griseus</name>
    <name type="common">Chinese hamster</name>
    <name type="synonym">Cricetulus barabensis griseus</name>
    <dbReference type="NCBI Taxonomy" id="10029"/>
    <lineage>
        <taxon>Eukaryota</taxon>
        <taxon>Metazoa</taxon>
        <taxon>Chordata</taxon>
        <taxon>Craniata</taxon>
        <taxon>Vertebrata</taxon>
        <taxon>Euteleostomi</taxon>
        <taxon>Mammalia</taxon>
        <taxon>Eutheria</taxon>
        <taxon>Euarchontoglires</taxon>
        <taxon>Glires</taxon>
        <taxon>Rodentia</taxon>
        <taxon>Myomorpha</taxon>
        <taxon>Muroidea</taxon>
        <taxon>Cricetidae</taxon>
        <taxon>Cricetinae</taxon>
        <taxon>Cricetulus</taxon>
    </lineage>
</organism>
<name>FOS_CRIGR</name>
<evidence type="ECO:0000250" key="1"/>
<evidence type="ECO:0000250" key="2">
    <source>
        <dbReference type="UniProtKB" id="P01100"/>
    </source>
</evidence>
<evidence type="ECO:0000250" key="3">
    <source>
        <dbReference type="UniProtKB" id="P01101"/>
    </source>
</evidence>
<evidence type="ECO:0000250" key="4">
    <source>
        <dbReference type="UniProtKB" id="P12841"/>
    </source>
</evidence>
<evidence type="ECO:0000255" key="5">
    <source>
        <dbReference type="PROSITE-ProRule" id="PRU00978"/>
    </source>
</evidence>
<evidence type="ECO:0000256" key="6">
    <source>
        <dbReference type="SAM" id="MobiDB-lite"/>
    </source>
</evidence>
<evidence type="ECO:0000305" key="7"/>
<gene>
    <name type="primary">FOS</name>
</gene>
<comment type="function">
    <text evidence="1">Nuclear phosphoprotein which forms a tight but non-covalently linked complex with the JUN/AP-1 transcription factor. On TGF-beta activation, forms a multimeric SMAD3/SMAD4/JUN/FOS complex, at the AP1/SMAD-binding site to regulate TGF-beta-mediated signaling. Has a critical function in regulating the development of cells destined to form and maintain the skeleton. It is thought to have an important role in signal transduction, cell proliferation and differentiation (By similarity). In growing cells, activates phospholipid synthesis, possibly by activating CDS1 and PI4K2A. This activity requires Tyr-dephosphorylation and association with the endoplasmic reticulum (By similarity).</text>
</comment>
<comment type="subunit">
    <text evidence="2 3 4">Heterodimer; with JUN (By similarity). Component of the SMAD3/SMAD4/JUN/FOS complex required for synergistic TGF-beta-mediated transcription at the AP1-binding site (By similarity). Interacts with SMAD3; the interaction is weak even on TGF-beta activation (By similarity). Interacts with MAFB (By similarity). Interacts with TSC22D3 (via N-terminus); this interaction inhibits the binding of active AP1 to its target DNA (By similarity). Interacts with CDS1 and PI4K2A (By similarity). Interacts (via bZIP domain and leucine-zipper region) with the multiprotein chromatin-remodeling complexes SWI/SNF: SWI/SNF-A (BAF) subunits SMARCB1, SMARCC2 and SMARCD1 (By similarity). Interacts (via bZIP domain and leucine-zipper region) with ARID1A (By similarity).</text>
</comment>
<comment type="subcellular location">
    <subcellularLocation>
        <location evidence="5">Nucleus</location>
    </subcellularLocation>
    <subcellularLocation>
        <location evidence="1">Endoplasmic reticulum</location>
    </subcellularLocation>
    <subcellularLocation>
        <location evidence="1">Cytoplasm</location>
        <location evidence="1">Cytosol</location>
    </subcellularLocation>
    <text evidence="1">In quiescent cells, present in very small amounts in the cytosol. Following induction of cell growth, first localizes to the endoplasmic reticulum and only later to the nucleus. Localization at the endoplasmic reticulum requires dephosphorylation at Tyr-10 and Tyr-30 (By similarity).</text>
</comment>
<comment type="PTM">
    <text evidence="1">Phosphorylated in the C-terminal upon stimulation by nerve growth factor (NGF) and epidermal growth factor (EGF). Phosphorylated, in vitro, by MAPK and RSK1. Phosphorylation on both Ser-363 and Ser-375 by MAPK1/2 and RSK1/2 leads to protein stabilization with phosphorylation on Ser-375 being the major site for protein stabilization on NGF stimulation. Phosphorylation on Ser-363 and Ser-375 primes further phosphorylations on Thr-326 and Thr-332 through promoting docking of MAPK to the DEF domain. Phosphorylation on Thr-232, induced by HA-RAS, activates the transcriptional activity and antagonizes sumoylation. Phosphorylation on Ser-363 by RSK2 in osteoblasts contributes to osteoblast transformation (By similarity).</text>
</comment>
<comment type="PTM">
    <text evidence="1">Constitutively sumoylated with SUMO1, SUMO2 and SUMO3. Desumoylated by SENP2. Sumoylation requires heterodimerization with JUN and is enhanced by mitogen stimulation. Sumoylation inhibits the AP-1 transcriptional activity and is, itself, inhibited by Ras-activated phosphorylation on Thr-232 (By similarity).</text>
</comment>
<comment type="PTM">
    <text evidence="1">In quiescent cells, the small amount of FOS present is phosphorylated at Tyr-10 and Tyr-30 by SRC. This Tyr-phosphorylated form is cytosolic. In growing cells, dephosphorylated by PTPN2. Dephosphorylation leads to the association with endoplasmic reticulum membranes and activation of phospholipid synthesis (By similarity).</text>
</comment>
<comment type="similarity">
    <text evidence="7">Belongs to the bZIP family. Fos subfamily.</text>
</comment>
<accession>Q9Z2Q8</accession>